<reference key="1">
    <citation type="journal article" date="2002" name="J. Bacteriol.">
        <title>Whole-genome comparison of Mycobacterium tuberculosis clinical and laboratory strains.</title>
        <authorList>
            <person name="Fleischmann R.D."/>
            <person name="Alland D."/>
            <person name="Eisen J.A."/>
            <person name="Carpenter L."/>
            <person name="White O."/>
            <person name="Peterson J.D."/>
            <person name="DeBoy R.T."/>
            <person name="Dodson R.J."/>
            <person name="Gwinn M.L."/>
            <person name="Haft D.H."/>
            <person name="Hickey E.K."/>
            <person name="Kolonay J.F."/>
            <person name="Nelson W.C."/>
            <person name="Umayam L.A."/>
            <person name="Ermolaeva M.D."/>
            <person name="Salzberg S.L."/>
            <person name="Delcher A."/>
            <person name="Utterback T.R."/>
            <person name="Weidman J.F."/>
            <person name="Khouri H.M."/>
            <person name="Gill J."/>
            <person name="Mikula A."/>
            <person name="Bishai W."/>
            <person name="Jacobs W.R. Jr."/>
            <person name="Venter J.C."/>
            <person name="Fraser C.M."/>
        </authorList>
    </citation>
    <scope>NUCLEOTIDE SEQUENCE [LARGE SCALE GENOMIC DNA]</scope>
    <source>
        <strain>CDC 1551 / Oshkosh</strain>
    </source>
</reference>
<gene>
    <name type="ordered locus">MT3895</name>
</gene>
<dbReference type="EC" id="2.1.1.-"/>
<dbReference type="EMBL" id="AE000516">
    <property type="protein sequence ID" value="AAK48260.1"/>
    <property type="molecule type" value="Genomic_DNA"/>
</dbReference>
<dbReference type="PIR" id="G70696">
    <property type="entry name" value="G70696"/>
</dbReference>
<dbReference type="RefSeq" id="WP_003420620.1">
    <property type="nucleotide sequence ID" value="NZ_KK341227.1"/>
</dbReference>
<dbReference type="SMR" id="P9WFH2"/>
<dbReference type="KEGG" id="mtc:MT3895"/>
<dbReference type="PATRIC" id="fig|83331.31.peg.4190"/>
<dbReference type="HOGENOM" id="CLU_056160_2_1_11"/>
<dbReference type="Proteomes" id="UP000001020">
    <property type="component" value="Chromosome"/>
</dbReference>
<dbReference type="GO" id="GO:0008168">
    <property type="term" value="F:methyltransferase activity"/>
    <property type="evidence" value="ECO:0007669"/>
    <property type="project" value="UniProtKB-KW"/>
</dbReference>
<dbReference type="GO" id="GO:0032259">
    <property type="term" value="P:methylation"/>
    <property type="evidence" value="ECO:0007669"/>
    <property type="project" value="UniProtKB-KW"/>
</dbReference>
<dbReference type="Gene3D" id="3.40.50.150">
    <property type="entry name" value="Vaccinia Virus protein VP39"/>
    <property type="match status" value="1"/>
</dbReference>
<dbReference type="InterPro" id="IPR007213">
    <property type="entry name" value="Ppm1/Ppm2/Tcmp"/>
</dbReference>
<dbReference type="InterPro" id="IPR029063">
    <property type="entry name" value="SAM-dependent_MTases_sf"/>
</dbReference>
<dbReference type="InterPro" id="IPR011610">
    <property type="entry name" value="SAM_mthyl_Trfase_ML2640-like"/>
</dbReference>
<dbReference type="NCBIfam" id="TIGR00027">
    <property type="entry name" value="mthyl_TIGR00027"/>
    <property type="match status" value="1"/>
</dbReference>
<dbReference type="PANTHER" id="PTHR43619">
    <property type="entry name" value="S-ADENOSYL-L-METHIONINE-DEPENDENT METHYLTRANSFERASE YKTD-RELATED"/>
    <property type="match status" value="1"/>
</dbReference>
<dbReference type="PANTHER" id="PTHR43619:SF2">
    <property type="entry name" value="S-ADENOSYL-L-METHIONINE-DEPENDENT METHYLTRANSFERASES SUPERFAMILY PROTEIN"/>
    <property type="match status" value="1"/>
</dbReference>
<dbReference type="Pfam" id="PF04072">
    <property type="entry name" value="LCM"/>
    <property type="match status" value="1"/>
</dbReference>
<dbReference type="SUPFAM" id="SSF53335">
    <property type="entry name" value="S-adenosyl-L-methionine-dependent methyltransferases"/>
    <property type="match status" value="1"/>
</dbReference>
<comment type="function">
    <text evidence="1">Exhibits S-adenosyl-L-methionine-dependent methyltransferase activity.</text>
</comment>
<comment type="similarity">
    <text evidence="2">Belongs to the UPF0677 family.</text>
</comment>
<evidence type="ECO:0000250" key="1"/>
<evidence type="ECO:0000305" key="2"/>
<keyword id="KW-0489">Methyltransferase</keyword>
<keyword id="KW-1185">Reference proteome</keyword>
<keyword id="KW-0949">S-adenosyl-L-methionine</keyword>
<keyword id="KW-0808">Transferase</keyword>
<organism>
    <name type="scientific">Mycobacterium tuberculosis (strain CDC 1551 / Oshkosh)</name>
    <dbReference type="NCBI Taxonomy" id="83331"/>
    <lineage>
        <taxon>Bacteria</taxon>
        <taxon>Bacillati</taxon>
        <taxon>Actinomycetota</taxon>
        <taxon>Actinomycetes</taxon>
        <taxon>Mycobacteriales</taxon>
        <taxon>Mycobacteriaceae</taxon>
        <taxon>Mycobacterium</taxon>
        <taxon>Mycobacterium tuberculosis complex</taxon>
    </lineage>
</organism>
<proteinExistence type="inferred from homology"/>
<feature type="chain" id="PRO_0000428539" description="Putative S-adenosyl-L-methionine-dependent methyltransferase MT3895">
    <location>
        <begin position="1"/>
        <end position="308"/>
    </location>
</feature>
<feature type="binding site" evidence="1">
    <location>
        <position position="131"/>
    </location>
    <ligand>
        <name>S-adenosyl-L-methionine</name>
        <dbReference type="ChEBI" id="CHEBI:59789"/>
    </ligand>
</feature>
<feature type="binding site" evidence="1">
    <location>
        <begin position="160"/>
        <end position="161"/>
    </location>
    <ligand>
        <name>S-adenosyl-L-methionine</name>
        <dbReference type="ChEBI" id="CHEBI:59789"/>
    </ligand>
</feature>
<accession>P9WFH2</accession>
<accession>L0TGK0</accession>
<accession>P72053</accession>
<accession>Q7D4V4</accession>
<name>Y3895_MYCTO</name>
<protein>
    <recommendedName>
        <fullName>Putative S-adenosyl-L-methionine-dependent methyltransferase MT3895</fullName>
        <ecNumber>2.1.1.-</ecNumber>
    </recommendedName>
</protein>
<sequence>MARTDDDSWDLATGVGATATLVAAGRARAARAAQPLIDDPFAEPLVRAVGVEFLTRWATGELDAADVDDPDAAWGLQRMTTELVVRTRYFDQFFLDAAAAGVRQAVILASGLDARGYRLPWPADTTVFEVDQPRVLEFKAQTLAGLGAQPTADLRMVPADLRHDWPDALRRGGFDAAEPAAWIAEGLFGYLPPDAQNRLLDHVTDLSAPGSRLALEAFLGSADRDSARVEEMIRTATRGWREHGFHLDIWALNYAGPRHEVSGYLDNHGWRSVGTTTAQLLAAHDLPAAPALPAGLADRPNYWTCVLG</sequence>